<evidence type="ECO:0000255" key="1">
    <source>
        <dbReference type="HAMAP-Rule" id="MF_00275"/>
    </source>
</evidence>
<organism>
    <name type="scientific">Delftia acidovorans (strain DSM 14801 / SPH-1)</name>
    <dbReference type="NCBI Taxonomy" id="398578"/>
    <lineage>
        <taxon>Bacteria</taxon>
        <taxon>Pseudomonadati</taxon>
        <taxon>Pseudomonadota</taxon>
        <taxon>Betaproteobacteria</taxon>
        <taxon>Burkholderiales</taxon>
        <taxon>Comamonadaceae</taxon>
        <taxon>Delftia</taxon>
    </lineage>
</organism>
<protein>
    <recommendedName>
        <fullName evidence="1">Potassium-transporting ATPase potassium-binding subunit</fullName>
    </recommendedName>
    <alternativeName>
        <fullName evidence="1">ATP phosphohydrolase [potassium-transporting] A chain</fullName>
    </alternativeName>
    <alternativeName>
        <fullName evidence="1">Potassium-binding and translocating subunit A</fullName>
    </alternativeName>
    <alternativeName>
        <fullName evidence="1">Potassium-translocating ATPase A chain</fullName>
    </alternativeName>
</protein>
<feature type="chain" id="PRO_1000114677" description="Potassium-transporting ATPase potassium-binding subunit">
    <location>
        <begin position="1"/>
        <end position="568"/>
    </location>
</feature>
<feature type="transmembrane region" description="Helical" evidence="1">
    <location>
        <begin position="1"/>
        <end position="21"/>
    </location>
</feature>
<feature type="transmembrane region" description="Helical" evidence="1">
    <location>
        <begin position="60"/>
        <end position="80"/>
    </location>
</feature>
<feature type="transmembrane region" description="Helical" evidence="1">
    <location>
        <begin position="129"/>
        <end position="149"/>
    </location>
</feature>
<feature type="transmembrane region" description="Helical" evidence="1">
    <location>
        <begin position="174"/>
        <end position="194"/>
    </location>
</feature>
<feature type="transmembrane region" description="Helical" evidence="1">
    <location>
        <begin position="251"/>
        <end position="271"/>
    </location>
</feature>
<feature type="transmembrane region" description="Helical" evidence="1">
    <location>
        <begin position="278"/>
        <end position="298"/>
    </location>
</feature>
<feature type="transmembrane region" description="Helical" evidence="1">
    <location>
        <begin position="381"/>
        <end position="401"/>
    </location>
</feature>
<feature type="transmembrane region" description="Helical" evidence="1">
    <location>
        <begin position="420"/>
        <end position="440"/>
    </location>
</feature>
<feature type="transmembrane region" description="Helical" evidence="1">
    <location>
        <begin position="488"/>
        <end position="508"/>
    </location>
</feature>
<feature type="transmembrane region" description="Helical" evidence="1">
    <location>
        <begin position="528"/>
        <end position="548"/>
    </location>
</feature>
<accession>A9C190</accession>
<comment type="function">
    <text evidence="1">Part of the high-affinity ATP-driven potassium transport (or Kdp) system, which catalyzes the hydrolysis of ATP coupled with the electrogenic transport of potassium into the cytoplasm. This subunit binds the periplasmic potassium ions and delivers the ions to the membrane domain of KdpB through an intramembrane tunnel.</text>
</comment>
<comment type="subunit">
    <text evidence="1">The system is composed of three essential subunits: KdpA, KdpB and KdpC.</text>
</comment>
<comment type="subcellular location">
    <subcellularLocation>
        <location evidence="1">Cell inner membrane</location>
        <topology evidence="1">Multi-pass membrane protein</topology>
    </subcellularLocation>
</comment>
<comment type="similarity">
    <text evidence="1">Belongs to the KdpA family.</text>
</comment>
<sequence length="568" mass="60218">MWLTWMEYALVLLLMTALAVPMGQWLARCFTSEHHAWIERLSFRALGVNPAERMGWQRYGLALLLSNGAMLLLGYALLRAQGWLPLNALGNAAQTPDLAFNTAASFVTNTNWQAYSGESSLSNATQMVAITFMMFAGAITGVVAAAGFIRGLARSSASDLGNYWVDYVRVLWRVMLPLSFVVALVYVWQGVPQALDGQVWATTLEGARQQILLGPVASLESIKHIGTNGGGFFGMNAAHPFENPTPLTNAIHILGMLLIPSAMTYAFGSMLLRRRQGWVLFGACLVMFVGFLALVFTAEQAGNPLLTAAGADQQISATQPGGNMEGKELRFGIADTALFVATTTAATTGSVNAMHDSLTPLGGLVPLAQMMINCVFGGDGVGLINLLQYAILTVFLAGMMIGRTPEFLGKKIEAREIKLVMLAVMAHPISVLGFTALAAVWPDTLASLANRGPHGFSEVLYAYASGTANNGSAFAGLNANTPFFNTTIGLAMLAGRYLTLLPMLALAGSLAAKPTVPAGPGTFPTATPLFMGLLVFVVVVVGGLTFLPSLALGPVVEQLQMLSGQVYP</sequence>
<gene>
    <name evidence="1" type="primary">kdpA</name>
    <name type="ordered locus">Daci_5925</name>
</gene>
<reference key="1">
    <citation type="submission" date="2007-11" db="EMBL/GenBank/DDBJ databases">
        <title>Complete sequence of Delftia acidovorans DSM 14801 / SPH-1.</title>
        <authorList>
            <person name="Copeland A."/>
            <person name="Lucas S."/>
            <person name="Lapidus A."/>
            <person name="Barry K."/>
            <person name="Glavina del Rio T."/>
            <person name="Dalin E."/>
            <person name="Tice H."/>
            <person name="Pitluck S."/>
            <person name="Lowry S."/>
            <person name="Clum A."/>
            <person name="Schmutz J."/>
            <person name="Larimer F."/>
            <person name="Land M."/>
            <person name="Hauser L."/>
            <person name="Kyrpides N."/>
            <person name="Kim E."/>
            <person name="Schleheck D."/>
            <person name="Richardson P."/>
        </authorList>
    </citation>
    <scope>NUCLEOTIDE SEQUENCE [LARGE SCALE GENOMIC DNA]</scope>
    <source>
        <strain>DSM 14801 / SPH-1</strain>
    </source>
</reference>
<dbReference type="EMBL" id="CP000884">
    <property type="protein sequence ID" value="ABX38553.1"/>
    <property type="molecule type" value="Genomic_DNA"/>
</dbReference>
<dbReference type="RefSeq" id="WP_012207722.1">
    <property type="nucleotide sequence ID" value="NC_010002.1"/>
</dbReference>
<dbReference type="SMR" id="A9C190"/>
<dbReference type="STRING" id="398578.Daci_5925"/>
<dbReference type="GeneID" id="24118914"/>
<dbReference type="KEGG" id="dac:Daci_5925"/>
<dbReference type="eggNOG" id="COG2060">
    <property type="taxonomic scope" value="Bacteria"/>
</dbReference>
<dbReference type="HOGENOM" id="CLU_018614_3_0_4"/>
<dbReference type="Proteomes" id="UP000000784">
    <property type="component" value="Chromosome"/>
</dbReference>
<dbReference type="GO" id="GO:0005886">
    <property type="term" value="C:plasma membrane"/>
    <property type="evidence" value="ECO:0007669"/>
    <property type="project" value="UniProtKB-SubCell"/>
</dbReference>
<dbReference type="GO" id="GO:0008556">
    <property type="term" value="F:P-type potassium transmembrane transporter activity"/>
    <property type="evidence" value="ECO:0007669"/>
    <property type="project" value="InterPro"/>
</dbReference>
<dbReference type="GO" id="GO:0030955">
    <property type="term" value="F:potassium ion binding"/>
    <property type="evidence" value="ECO:0007669"/>
    <property type="project" value="UniProtKB-UniRule"/>
</dbReference>
<dbReference type="HAMAP" id="MF_00275">
    <property type="entry name" value="KdpA"/>
    <property type="match status" value="1"/>
</dbReference>
<dbReference type="InterPro" id="IPR004623">
    <property type="entry name" value="KdpA"/>
</dbReference>
<dbReference type="NCBIfam" id="TIGR00680">
    <property type="entry name" value="kdpA"/>
    <property type="match status" value="1"/>
</dbReference>
<dbReference type="PANTHER" id="PTHR30607">
    <property type="entry name" value="POTASSIUM-TRANSPORTING ATPASE A CHAIN"/>
    <property type="match status" value="1"/>
</dbReference>
<dbReference type="PANTHER" id="PTHR30607:SF2">
    <property type="entry name" value="POTASSIUM-TRANSPORTING ATPASE POTASSIUM-BINDING SUBUNIT"/>
    <property type="match status" value="1"/>
</dbReference>
<dbReference type="Pfam" id="PF03814">
    <property type="entry name" value="KdpA"/>
    <property type="match status" value="1"/>
</dbReference>
<dbReference type="PIRSF" id="PIRSF001294">
    <property type="entry name" value="K_ATPaseA"/>
    <property type="match status" value="1"/>
</dbReference>
<proteinExistence type="inferred from homology"/>
<name>KDPA_DELAS</name>
<keyword id="KW-0997">Cell inner membrane</keyword>
<keyword id="KW-1003">Cell membrane</keyword>
<keyword id="KW-0406">Ion transport</keyword>
<keyword id="KW-0472">Membrane</keyword>
<keyword id="KW-0630">Potassium</keyword>
<keyword id="KW-0633">Potassium transport</keyword>
<keyword id="KW-1185">Reference proteome</keyword>
<keyword id="KW-0812">Transmembrane</keyword>
<keyword id="KW-1133">Transmembrane helix</keyword>
<keyword id="KW-0813">Transport</keyword>